<protein>
    <recommendedName>
        <fullName>Serine/threonine-protein phosphatase 6 regulatory subunit 3-A</fullName>
    </recommendedName>
    <alternativeName>
        <fullName>SAPS domain family member 3-A</fullName>
    </alternativeName>
</protein>
<keyword id="KW-1185">Reference proteome</keyword>
<reference key="1">
    <citation type="submission" date="2004-05" db="EMBL/GenBank/DDBJ databases">
        <authorList>
            <consortium name="NIH - Xenopus Gene Collection (XGC) project"/>
        </authorList>
    </citation>
    <scope>NUCLEOTIDE SEQUENCE [LARGE SCALE MRNA]</scope>
    <source>
        <tissue>Oocyte</tissue>
    </source>
</reference>
<sequence length="852" mass="95550">MFWKFDLHSSSHIDTLLERDEVTLKELMDEEDILQECKAQNRKLVEFLLKAECLEDLVTFITEEPPQDMDEKIRYKYPNLSCELLTSDVSQINDRLGEDESLLKRLYAFLLNDPPLNPLLASFFSKVLSILISRKPEQIVAFLKQKDDFVNLIIKHIGTSAIMDLLLRLLTCIEPPQLRQDVLNWLNEEKIIQRLVEIVHPSQDEDRHSNASQSLCEIIRLSRDQMLQVQNSSEPDPLLATLEKKEILEQLLSNIFLKEKNESAIVSAIQILLTLLETRRPAFEGHIDLCPPGVNYSAFSVNKNVLAAIQERLPSFHQLLLDPPKTGVMKTTWGILDPPVGNTRLNVIRLIASLLQTNTHSINEELIELNTMGVILDMFFKYSWNNFLHTQVEICLALILASPGDSPEHSTISEQNSTGDHVLLKHLFLKCHLIDRILEAWAMNEKRQSEGGQRYGYMGHLTRIANCIVHSIEKGPNSVLAHQLIKDLPTDAQERWETFCTSSLGETNKRNTVDLVTTRHIHSSSDDEIEFKDPGFSQDSAIQQFGFNDEKFADQDDIGNVSFDRVSDINFSLNANESANIALFEACCKERIQQFDDGGSDEEDIWEEKNIAFPQETQRRSSSGSTDSEESTDSEEEETVKQGLFESSTVNHEDKMEVDANEASNWTANFDIPMETAHVASLDSVGSDAWSTEEPLSSKETGWASFSEFTSPINTKETIRSSSPVEMETSTEPVDPLSVNASAQTEVTVAMDAVSDGDEEGENADQMTETVMNGSMKETLSLTVDAKTETAVFKSEEGKLTTSHDSACKYGVVENFDSAMENAPPTQPSSSSQEQRTSEQIVLDGASANGPV</sequence>
<accession>Q6NRI0</accession>
<dbReference type="EMBL" id="BC070770">
    <property type="protein sequence ID" value="AAH70770.1"/>
    <property type="molecule type" value="mRNA"/>
</dbReference>
<dbReference type="RefSeq" id="NP_001084904.1">
    <property type="nucleotide sequence ID" value="NM_001091435.1"/>
</dbReference>
<dbReference type="SMR" id="Q6NRI0"/>
<dbReference type="DNASU" id="431955"/>
<dbReference type="GeneID" id="431955"/>
<dbReference type="KEGG" id="xla:431955"/>
<dbReference type="AGR" id="Xenbase:XB-GENE-5822375"/>
<dbReference type="CTD" id="431955"/>
<dbReference type="Xenbase" id="XB-GENE-5822375">
    <property type="gene designation" value="ppp6r3.L"/>
</dbReference>
<dbReference type="OrthoDB" id="295029at2759"/>
<dbReference type="Proteomes" id="UP000186698">
    <property type="component" value="Chromosome 4L"/>
</dbReference>
<dbReference type="Bgee" id="431955">
    <property type="expression patterns" value="Expressed in blastula and 19 other cell types or tissues"/>
</dbReference>
<dbReference type="GO" id="GO:0005829">
    <property type="term" value="C:cytosol"/>
    <property type="evidence" value="ECO:0000318"/>
    <property type="project" value="GO_Central"/>
</dbReference>
<dbReference type="GO" id="GO:0005634">
    <property type="term" value="C:nucleus"/>
    <property type="evidence" value="ECO:0000318"/>
    <property type="project" value="GO_Central"/>
</dbReference>
<dbReference type="GO" id="GO:0019903">
    <property type="term" value="F:protein phosphatase binding"/>
    <property type="evidence" value="ECO:0007669"/>
    <property type="project" value="InterPro"/>
</dbReference>
<dbReference type="GO" id="GO:0019888">
    <property type="term" value="F:protein phosphatase regulator activity"/>
    <property type="evidence" value="ECO:0000318"/>
    <property type="project" value="GO_Central"/>
</dbReference>
<dbReference type="GO" id="GO:0009966">
    <property type="term" value="P:regulation of signal transduction"/>
    <property type="evidence" value="ECO:0000318"/>
    <property type="project" value="GO_Central"/>
</dbReference>
<dbReference type="InterPro" id="IPR016024">
    <property type="entry name" value="ARM-type_fold"/>
</dbReference>
<dbReference type="InterPro" id="IPR007587">
    <property type="entry name" value="SAPS"/>
</dbReference>
<dbReference type="PANTHER" id="PTHR12634:SF12">
    <property type="entry name" value="SERINE_THREONINE-PROTEIN PHOSPHATASE 6 REGULATORY SUBUNIT 3"/>
    <property type="match status" value="1"/>
</dbReference>
<dbReference type="PANTHER" id="PTHR12634">
    <property type="entry name" value="SIT4 YEAST -ASSOCIATING PROTEIN-RELATED"/>
    <property type="match status" value="1"/>
</dbReference>
<dbReference type="Pfam" id="PF04499">
    <property type="entry name" value="SAPS"/>
    <property type="match status" value="2"/>
</dbReference>
<dbReference type="SUPFAM" id="SSF48371">
    <property type="entry name" value="ARM repeat"/>
    <property type="match status" value="1"/>
</dbReference>
<feature type="chain" id="PRO_0000046103" description="Serine/threonine-protein phosphatase 6 regulatory subunit 3-A">
    <location>
        <begin position="1"/>
        <end position="852"/>
    </location>
</feature>
<feature type="region of interest" description="Disordered" evidence="2">
    <location>
        <begin position="610"/>
        <end position="653"/>
    </location>
</feature>
<feature type="region of interest" description="Disordered" evidence="2">
    <location>
        <begin position="714"/>
        <end position="742"/>
    </location>
</feature>
<feature type="region of interest" description="Disordered" evidence="2">
    <location>
        <begin position="817"/>
        <end position="852"/>
    </location>
</feature>
<feature type="compositionally biased region" description="Acidic residues" evidence="2">
    <location>
        <begin position="627"/>
        <end position="638"/>
    </location>
</feature>
<feature type="compositionally biased region" description="Polar residues" evidence="2">
    <location>
        <begin position="714"/>
        <end position="732"/>
    </location>
</feature>
<feature type="compositionally biased region" description="Low complexity" evidence="2">
    <location>
        <begin position="828"/>
        <end position="840"/>
    </location>
</feature>
<name>P6R3A_XENLA</name>
<organism>
    <name type="scientific">Xenopus laevis</name>
    <name type="common">African clawed frog</name>
    <dbReference type="NCBI Taxonomy" id="8355"/>
    <lineage>
        <taxon>Eukaryota</taxon>
        <taxon>Metazoa</taxon>
        <taxon>Chordata</taxon>
        <taxon>Craniata</taxon>
        <taxon>Vertebrata</taxon>
        <taxon>Euteleostomi</taxon>
        <taxon>Amphibia</taxon>
        <taxon>Batrachia</taxon>
        <taxon>Anura</taxon>
        <taxon>Pipoidea</taxon>
        <taxon>Pipidae</taxon>
        <taxon>Xenopodinae</taxon>
        <taxon>Xenopus</taxon>
        <taxon>Xenopus</taxon>
    </lineage>
</organism>
<evidence type="ECO:0000250" key="1"/>
<evidence type="ECO:0000256" key="2">
    <source>
        <dbReference type="SAM" id="MobiDB-lite"/>
    </source>
</evidence>
<evidence type="ECO:0000305" key="3"/>
<gene>
    <name type="primary">ppp6r3-a</name>
    <name type="synonym">pp6r3-a</name>
    <name type="synonym">saps3-a</name>
</gene>
<comment type="function">
    <text evidence="1">Regulatory subunit of protein phosphatase 6 (PP6). May function as a scaffolding PP6 subunit (By similarity).</text>
</comment>
<comment type="similarity">
    <text evidence="3">Belongs to the SAPS family.</text>
</comment>
<proteinExistence type="evidence at transcript level"/>